<proteinExistence type="inferred from homology"/>
<protein>
    <recommendedName>
        <fullName evidence="1">Protein FdhE</fullName>
    </recommendedName>
</protein>
<comment type="function">
    <text evidence="1">Necessary for formate dehydrogenase activity.</text>
</comment>
<comment type="subcellular location">
    <subcellularLocation>
        <location evidence="1">Cytoplasm</location>
    </subcellularLocation>
</comment>
<comment type="similarity">
    <text evidence="1">Belongs to the FdhE family.</text>
</comment>
<name>FDHE_SALCH</name>
<keyword id="KW-0963">Cytoplasm</keyword>
<sequence>MSIRIIPQDELGSSEKRTADMIPPLLFPRLKNVYNRRAERLRELAENNPLGDYLRFAALIAHAQEVVLYDHPLEMDLTARIKEANDQGKPPLDIHVLPRDKHWQKLLHSLIAELKPEMSGPALAVIENLEKASEQELEQMASALFASDFASVSSDKAPFIWAALSLYWAQMASLIPGKARAEYGEARQYCPVCGSMPVSSMVQISTTQGLRYLHCNLCETEWHVVRVKCSNCEQSRDLHYWSLENEQAAVKAESCGDCGTYLKILYQEKDPKVEAVADDLASLVLDARMEQEGFARSSINPFLFPGEGE</sequence>
<accession>Q57HI2</accession>
<organism>
    <name type="scientific">Salmonella choleraesuis (strain SC-B67)</name>
    <dbReference type="NCBI Taxonomy" id="321314"/>
    <lineage>
        <taxon>Bacteria</taxon>
        <taxon>Pseudomonadati</taxon>
        <taxon>Pseudomonadota</taxon>
        <taxon>Gammaproteobacteria</taxon>
        <taxon>Enterobacterales</taxon>
        <taxon>Enterobacteriaceae</taxon>
        <taxon>Salmonella</taxon>
    </lineage>
</organism>
<evidence type="ECO:0000255" key="1">
    <source>
        <dbReference type="HAMAP-Rule" id="MF_00611"/>
    </source>
</evidence>
<dbReference type="EMBL" id="AE017220">
    <property type="protein sequence ID" value="AAX67830.1"/>
    <property type="molecule type" value="Genomic_DNA"/>
</dbReference>
<dbReference type="RefSeq" id="WP_001541226.1">
    <property type="nucleotide sequence ID" value="NC_006905.1"/>
</dbReference>
<dbReference type="SMR" id="Q57HI2"/>
<dbReference type="KEGG" id="sec:SCH_3924"/>
<dbReference type="HOGENOM" id="CLU_055275_0_0_6"/>
<dbReference type="Proteomes" id="UP000000538">
    <property type="component" value="Chromosome"/>
</dbReference>
<dbReference type="GO" id="GO:0005829">
    <property type="term" value="C:cytosol"/>
    <property type="evidence" value="ECO:0007669"/>
    <property type="project" value="TreeGrafter"/>
</dbReference>
<dbReference type="GO" id="GO:0008199">
    <property type="term" value="F:ferric iron binding"/>
    <property type="evidence" value="ECO:0007669"/>
    <property type="project" value="TreeGrafter"/>
</dbReference>
<dbReference type="GO" id="GO:0051604">
    <property type="term" value="P:protein maturation"/>
    <property type="evidence" value="ECO:0007669"/>
    <property type="project" value="TreeGrafter"/>
</dbReference>
<dbReference type="CDD" id="cd16341">
    <property type="entry name" value="FdhE"/>
    <property type="match status" value="1"/>
</dbReference>
<dbReference type="FunFam" id="3.90.1670.10:FF:000001">
    <property type="entry name" value="Protein FdhE"/>
    <property type="match status" value="1"/>
</dbReference>
<dbReference type="Gene3D" id="3.90.1670.10">
    <property type="entry name" value="FdhE-like domain"/>
    <property type="match status" value="1"/>
</dbReference>
<dbReference type="HAMAP" id="MF_00611">
    <property type="entry name" value="FdeH"/>
    <property type="match status" value="1"/>
</dbReference>
<dbReference type="InterPro" id="IPR024064">
    <property type="entry name" value="FdhE-like_sf"/>
</dbReference>
<dbReference type="InterPro" id="IPR056796">
    <property type="entry name" value="FdhE_C"/>
</dbReference>
<dbReference type="InterPro" id="IPR056797">
    <property type="entry name" value="FdhE_central"/>
</dbReference>
<dbReference type="InterPro" id="IPR056774">
    <property type="entry name" value="FdhE_N"/>
</dbReference>
<dbReference type="InterPro" id="IPR006452">
    <property type="entry name" value="Formate_DH_accessory"/>
</dbReference>
<dbReference type="NCBIfam" id="TIGR01562">
    <property type="entry name" value="FdhE"/>
    <property type="match status" value="1"/>
</dbReference>
<dbReference type="NCBIfam" id="NF002925">
    <property type="entry name" value="PRK03564.1"/>
    <property type="match status" value="1"/>
</dbReference>
<dbReference type="PANTHER" id="PTHR37689">
    <property type="entry name" value="PROTEIN FDHE"/>
    <property type="match status" value="1"/>
</dbReference>
<dbReference type="PANTHER" id="PTHR37689:SF1">
    <property type="entry name" value="PROTEIN FDHE"/>
    <property type="match status" value="1"/>
</dbReference>
<dbReference type="Pfam" id="PF24860">
    <property type="entry name" value="FdhE_C"/>
    <property type="match status" value="1"/>
</dbReference>
<dbReference type="Pfam" id="PF24859">
    <property type="entry name" value="FdhE_central"/>
    <property type="match status" value="1"/>
</dbReference>
<dbReference type="Pfam" id="PF04216">
    <property type="entry name" value="FdhE_N"/>
    <property type="match status" value="1"/>
</dbReference>
<dbReference type="PIRSF" id="PIRSF018296">
    <property type="entry name" value="Format_dh_formtn"/>
    <property type="match status" value="1"/>
</dbReference>
<dbReference type="SUPFAM" id="SSF144020">
    <property type="entry name" value="FdhE-like"/>
    <property type="match status" value="1"/>
</dbReference>
<feature type="chain" id="PRO_1000056709" description="Protein FdhE">
    <location>
        <begin position="1"/>
        <end position="309"/>
    </location>
</feature>
<reference key="1">
    <citation type="journal article" date="2005" name="Nucleic Acids Res.">
        <title>The genome sequence of Salmonella enterica serovar Choleraesuis, a highly invasive and resistant zoonotic pathogen.</title>
        <authorList>
            <person name="Chiu C.-H."/>
            <person name="Tang P."/>
            <person name="Chu C."/>
            <person name="Hu S."/>
            <person name="Bao Q."/>
            <person name="Yu J."/>
            <person name="Chou Y.-Y."/>
            <person name="Wang H.-S."/>
            <person name="Lee Y.-S."/>
        </authorList>
    </citation>
    <scope>NUCLEOTIDE SEQUENCE [LARGE SCALE GENOMIC DNA]</scope>
    <source>
        <strain>SC-B67</strain>
    </source>
</reference>
<gene>
    <name evidence="1" type="primary">fdhE</name>
    <name type="ordered locus">SCH_3924</name>
</gene>